<proteinExistence type="evidence at protein level"/>
<gene>
    <name type="primary">CROT</name>
    <name type="synonym">COT</name>
</gene>
<keyword id="KW-0007">Acetylation</keyword>
<keyword id="KW-0012">Acyltransferase</keyword>
<keyword id="KW-0025">Alternative splicing</keyword>
<keyword id="KW-0276">Fatty acid metabolism</keyword>
<keyword id="KW-0443">Lipid metabolism</keyword>
<keyword id="KW-0576">Peroxisome</keyword>
<keyword id="KW-1267">Proteomics identification</keyword>
<keyword id="KW-1185">Reference proteome</keyword>
<keyword id="KW-0808">Transferase</keyword>
<keyword id="KW-0813">Transport</keyword>
<name>OCTC_HUMAN</name>
<sequence length="612" mass="70178">MENQLAKSTEERTFQYQDSLPSLPVPSLEESLKKYLESVKPFANQEEYKKTEEIVQKFQSGIGEKLHQKLLERAKGKRNWLEEWWLNVAYLDVRIPSQLNVNFAGPAAHFEHYWPPKEGTQLERGSITLWHNLNYWQLLRKEKVPVHKVGNTPLDMNQFRMLFSTCKVPGITRDSIMNYFRTESEGRSPNHIVVLCRGRAFVFDVIHEGCLVTPPELLRQLTYIHKKCHSEPDGPGIAALTSEERTRWAKAREYLIGLDPENLALLEKIQSSLLVYSMEDSSPHVTPEDYSEIIAAILIGDPTVRWGDKSYNLISFSNGVFGCNCDHAPFDAMIMVNISYYVDEKIFQNEGRWKGSEKVRDIPLPEELIFIVDEKVLNDINQAKAQYLREASDLQIAAYAFTSFGKKLTKNKMLHPDTFIQLALQLAYYRLHGHPGCCYETAMTRHFYHGRTETMRSCTVEAVRWCQSMQDPSVNLRERQQKMLQAFAKHNKMMKDCSAGKGFDRHLLGLLLIAKEEGLPVPELFTDPLFSKSGGGGNFVLSTSLVGYLRVQGVVVPMVHNGYGFFYHIRDDRFVVACSAWKSCPETDAEKLVQLTFCAFHDMIQLMNSTHL</sequence>
<comment type="function">
    <text evidence="4">Beta-oxidation of fatty acids. The highest activity concerns the C6 to C10 chain length substrate. Converts the end product of pristanic acid beta oxidation, 4,8-dimethylnonanoyl-CoA, to its corresponding carnitine ester.</text>
</comment>
<comment type="catalytic activity">
    <reaction evidence="4">
        <text>octanoyl-CoA + (R)-carnitine = O-octanoyl-(R)-carnitine + CoA</text>
        <dbReference type="Rhea" id="RHEA:17177"/>
        <dbReference type="ChEBI" id="CHEBI:16347"/>
        <dbReference type="ChEBI" id="CHEBI:18102"/>
        <dbReference type="ChEBI" id="CHEBI:57287"/>
        <dbReference type="ChEBI" id="CHEBI:57386"/>
        <dbReference type="EC" id="2.3.1.137"/>
    </reaction>
</comment>
<comment type="catalytic activity">
    <reaction evidence="4">
        <text>4,8-dimethylnonanoyl-CoA + (R)-carnitine = O-4,8-dimethylnonanoyl-(R)-carnitine + CoA</text>
        <dbReference type="Rhea" id="RHEA:44860"/>
        <dbReference type="ChEBI" id="CHEBI:16347"/>
        <dbReference type="ChEBI" id="CHEBI:57287"/>
        <dbReference type="ChEBI" id="CHEBI:77061"/>
        <dbReference type="ChEBI" id="CHEBI:84654"/>
    </reaction>
</comment>
<comment type="pathway">
    <text>Lipid metabolism; fatty acid beta-oxidation.</text>
</comment>
<comment type="subunit">
    <text evidence="7">Monomer.</text>
</comment>
<comment type="interaction">
    <interactant intactId="EBI-25835363">
        <id>Q9UKG9-2</id>
    </interactant>
    <interactant intactId="EBI-718729">
        <id>P55212</id>
        <label>CASP6</label>
    </interactant>
    <organismsDiffer>false</organismsDiffer>
    <experiments>3</experiments>
</comment>
<comment type="interaction">
    <interactant intactId="EBI-25835363">
        <id>Q9UKG9-2</id>
    </interactant>
    <interactant intactId="EBI-446479">
        <id>P99999</id>
        <label>CYCS</label>
    </interactant>
    <organismsDiffer>false</organismsDiffer>
    <experiments>3</experiments>
</comment>
<comment type="interaction">
    <interactant intactId="EBI-25835363">
        <id>Q9UKG9-2</id>
    </interactant>
    <interactant intactId="EBI-473886">
        <id>O00291</id>
        <label>HIP1</label>
    </interactant>
    <organismsDiffer>false</organismsDiffer>
    <experiments>3</experiments>
</comment>
<comment type="interaction">
    <interactant intactId="EBI-25835363">
        <id>Q9UKG9-2</id>
    </interactant>
    <interactant intactId="EBI-5280197">
        <id>O75400-2</id>
        <label>PRPF40A</label>
    </interactant>
    <organismsDiffer>false</organismsDiffer>
    <experiments>3</experiments>
</comment>
<comment type="interaction">
    <interactant intactId="EBI-25835363">
        <id>Q9UKG9-2</id>
    </interactant>
    <interactant intactId="EBI-286642">
        <id>P62826</id>
        <label>RAN</label>
    </interactant>
    <organismsDiffer>false</organismsDiffer>
    <experiments>3</experiments>
</comment>
<comment type="subcellular location">
    <subcellularLocation>
        <location evidence="6">Peroxisome</location>
    </subcellularLocation>
</comment>
<comment type="alternative products">
    <event type="alternative splicing"/>
    <isoform>
        <id>Q9UKG9-1</id>
        <name>1</name>
        <sequence type="displayed"/>
    </isoform>
    <isoform>
        <id>Q9UKG9-2</id>
        <name>2</name>
        <sequence type="described" ref="VSP_045213 VSP_045214"/>
    </isoform>
    <isoform>
        <id>Q9UKG9-3</id>
        <name>3</name>
        <sequence type="described" ref="VSP_046953"/>
    </isoform>
</comment>
<comment type="similarity">
    <text evidence="6">Belongs to the carnitine/choline acetyltransferase family.</text>
</comment>
<reference key="1">
    <citation type="journal article" date="1999" name="Biochem. Biophys. Res. Commun.">
        <title>Molecular cloning and expression of human carnitine octanoyltransferase: evidence for its role in the peroxisomal beta-oxidation of branched-chain fatty acids.</title>
        <authorList>
            <person name="Ferdinandusse S."/>
            <person name="Mulders J."/>
            <person name="Ijlst L."/>
            <person name="Denis S."/>
            <person name="Dacremont G."/>
            <person name="Waterham H.R."/>
            <person name="Wanders R.J.A."/>
        </authorList>
    </citation>
    <scope>NUCLEOTIDE SEQUENCE [MRNA] (ISOFORM 1)</scope>
    <scope>FUNCTION</scope>
    <scope>SUBUNIT</scope>
    <scope>CATALYTIC ACTIVITY</scope>
    <source>
        <tissue>Skin</tissue>
    </source>
</reference>
<reference key="2">
    <citation type="submission" date="1998-06" db="EMBL/GenBank/DDBJ databases">
        <title>Cloning of the human gene for carnitine octanoyltransferase.</title>
        <authorList>
            <person name="Kim D.G."/>
            <person name="Hlubb C.W."/>
            <person name="Yun J."/>
            <person name="Mihalik S.J."/>
        </authorList>
    </citation>
    <scope>NUCLEOTIDE SEQUENCE [MRNA] (ISOFORM 1)</scope>
</reference>
<reference key="3">
    <citation type="journal article" date="2003" name="Nature">
        <title>The DNA sequence of human chromosome 7.</title>
        <authorList>
            <person name="Hillier L.W."/>
            <person name="Fulton R.S."/>
            <person name="Fulton L.A."/>
            <person name="Graves T.A."/>
            <person name="Pepin K.H."/>
            <person name="Wagner-McPherson C."/>
            <person name="Layman D."/>
            <person name="Maas J."/>
            <person name="Jaeger S."/>
            <person name="Walker R."/>
            <person name="Wylie K."/>
            <person name="Sekhon M."/>
            <person name="Becker M.C."/>
            <person name="O'Laughlin M.D."/>
            <person name="Schaller M.E."/>
            <person name="Fewell G.A."/>
            <person name="Delehaunty K.D."/>
            <person name="Miner T.L."/>
            <person name="Nash W.E."/>
            <person name="Cordes M."/>
            <person name="Du H."/>
            <person name="Sun H."/>
            <person name="Edwards J."/>
            <person name="Bradshaw-Cordum H."/>
            <person name="Ali J."/>
            <person name="Andrews S."/>
            <person name="Isak A."/>
            <person name="Vanbrunt A."/>
            <person name="Nguyen C."/>
            <person name="Du F."/>
            <person name="Lamar B."/>
            <person name="Courtney L."/>
            <person name="Kalicki J."/>
            <person name="Ozersky P."/>
            <person name="Bielicki L."/>
            <person name="Scott K."/>
            <person name="Holmes A."/>
            <person name="Harkins R."/>
            <person name="Harris A."/>
            <person name="Strong C.M."/>
            <person name="Hou S."/>
            <person name="Tomlinson C."/>
            <person name="Dauphin-Kohlberg S."/>
            <person name="Kozlowicz-Reilly A."/>
            <person name="Leonard S."/>
            <person name="Rohlfing T."/>
            <person name="Rock S.M."/>
            <person name="Tin-Wollam A.-M."/>
            <person name="Abbott A."/>
            <person name="Minx P."/>
            <person name="Maupin R."/>
            <person name="Strowmatt C."/>
            <person name="Latreille P."/>
            <person name="Miller N."/>
            <person name="Johnson D."/>
            <person name="Murray J."/>
            <person name="Woessner J.P."/>
            <person name="Wendl M.C."/>
            <person name="Yang S.-P."/>
            <person name="Schultz B.R."/>
            <person name="Wallis J.W."/>
            <person name="Spieth J."/>
            <person name="Bieri T.A."/>
            <person name="Nelson J.O."/>
            <person name="Berkowicz N."/>
            <person name="Wohldmann P.E."/>
            <person name="Cook L.L."/>
            <person name="Hickenbotham M.T."/>
            <person name="Eldred J."/>
            <person name="Williams D."/>
            <person name="Bedell J.A."/>
            <person name="Mardis E.R."/>
            <person name="Clifton S.W."/>
            <person name="Chissoe S.L."/>
            <person name="Marra M.A."/>
            <person name="Raymond C."/>
            <person name="Haugen E."/>
            <person name="Gillett W."/>
            <person name="Zhou Y."/>
            <person name="James R."/>
            <person name="Phelps K."/>
            <person name="Iadanoto S."/>
            <person name="Bubb K."/>
            <person name="Simms E."/>
            <person name="Levy R."/>
            <person name="Clendenning J."/>
            <person name="Kaul R."/>
            <person name="Kent W.J."/>
            <person name="Furey T.S."/>
            <person name="Baertsch R.A."/>
            <person name="Brent M.R."/>
            <person name="Keibler E."/>
            <person name="Flicek P."/>
            <person name="Bork P."/>
            <person name="Suyama M."/>
            <person name="Bailey J.A."/>
            <person name="Portnoy M.E."/>
            <person name="Torrents D."/>
            <person name="Chinwalla A.T."/>
            <person name="Gish W.R."/>
            <person name="Eddy S.R."/>
            <person name="McPherson J.D."/>
            <person name="Olson M.V."/>
            <person name="Eichler E.E."/>
            <person name="Green E.D."/>
            <person name="Waterston R.H."/>
            <person name="Wilson R.K."/>
        </authorList>
    </citation>
    <scope>NUCLEOTIDE SEQUENCE [LARGE SCALE GENOMIC DNA]</scope>
</reference>
<reference key="4">
    <citation type="journal article" date="2003" name="Science">
        <title>Human chromosome 7: DNA sequence and biology.</title>
        <authorList>
            <person name="Scherer S.W."/>
            <person name="Cheung J."/>
            <person name="MacDonald J.R."/>
            <person name="Osborne L.R."/>
            <person name="Nakabayashi K."/>
            <person name="Herbrick J.-A."/>
            <person name="Carson A.R."/>
            <person name="Parker-Katiraee L."/>
            <person name="Skaug J."/>
            <person name="Khaja R."/>
            <person name="Zhang J."/>
            <person name="Hudek A.K."/>
            <person name="Li M."/>
            <person name="Haddad M."/>
            <person name="Duggan G.E."/>
            <person name="Fernandez B.A."/>
            <person name="Kanematsu E."/>
            <person name="Gentles S."/>
            <person name="Christopoulos C.C."/>
            <person name="Choufani S."/>
            <person name="Kwasnicka D."/>
            <person name="Zheng X.H."/>
            <person name="Lai Z."/>
            <person name="Nusskern D.R."/>
            <person name="Zhang Q."/>
            <person name="Gu Z."/>
            <person name="Lu F."/>
            <person name="Zeesman S."/>
            <person name="Nowaczyk M.J."/>
            <person name="Teshima I."/>
            <person name="Chitayat D."/>
            <person name="Shuman C."/>
            <person name="Weksberg R."/>
            <person name="Zackai E.H."/>
            <person name="Grebe T.A."/>
            <person name="Cox S.R."/>
            <person name="Kirkpatrick S.J."/>
            <person name="Rahman N."/>
            <person name="Friedman J.M."/>
            <person name="Heng H.H.Q."/>
            <person name="Pelicci P.G."/>
            <person name="Lo-Coco F."/>
            <person name="Belloni E."/>
            <person name="Shaffer L.G."/>
            <person name="Pober B."/>
            <person name="Morton C.C."/>
            <person name="Gusella J.F."/>
            <person name="Bruns G.A.P."/>
            <person name="Korf B.R."/>
            <person name="Quade B.J."/>
            <person name="Ligon A.H."/>
            <person name="Ferguson H."/>
            <person name="Higgins A.W."/>
            <person name="Leach N.T."/>
            <person name="Herrick S.R."/>
            <person name="Lemyre E."/>
            <person name="Farra C.G."/>
            <person name="Kim H.-G."/>
            <person name="Summers A.M."/>
            <person name="Gripp K.W."/>
            <person name="Roberts W."/>
            <person name="Szatmari P."/>
            <person name="Winsor E.J.T."/>
            <person name="Grzeschik K.-H."/>
            <person name="Teebi A."/>
            <person name="Minassian B.A."/>
            <person name="Kere J."/>
            <person name="Armengol L."/>
            <person name="Pujana M.A."/>
            <person name="Estivill X."/>
            <person name="Wilson M.D."/>
            <person name="Koop B.F."/>
            <person name="Tosi S."/>
            <person name="Moore G.E."/>
            <person name="Boright A.P."/>
            <person name="Zlotorynski E."/>
            <person name="Kerem B."/>
            <person name="Kroisel P.M."/>
            <person name="Petek E."/>
            <person name="Oscier D.G."/>
            <person name="Mould S.J."/>
            <person name="Doehner H."/>
            <person name="Doehner K."/>
            <person name="Rommens J.M."/>
            <person name="Vincent J.B."/>
            <person name="Venter J.C."/>
            <person name="Li P.W."/>
            <person name="Mural R.J."/>
            <person name="Adams M.D."/>
            <person name="Tsui L.-C."/>
        </authorList>
    </citation>
    <scope>NUCLEOTIDE SEQUENCE [LARGE SCALE GENOMIC DNA]</scope>
</reference>
<reference key="5">
    <citation type="submission" date="2005-09" db="EMBL/GenBank/DDBJ databases">
        <authorList>
            <person name="Mural R.J."/>
            <person name="Istrail S."/>
            <person name="Sutton G.G."/>
            <person name="Florea L."/>
            <person name="Halpern A.L."/>
            <person name="Mobarry C.M."/>
            <person name="Lippert R."/>
            <person name="Walenz B."/>
            <person name="Shatkay H."/>
            <person name="Dew I."/>
            <person name="Miller J.R."/>
            <person name="Flanigan M.J."/>
            <person name="Edwards N.J."/>
            <person name="Bolanos R."/>
            <person name="Fasulo D."/>
            <person name="Halldorsson B.V."/>
            <person name="Hannenhalli S."/>
            <person name="Turner R."/>
            <person name="Yooseph S."/>
            <person name="Lu F."/>
            <person name="Nusskern D.R."/>
            <person name="Shue B.C."/>
            <person name="Zheng X.H."/>
            <person name="Zhong F."/>
            <person name="Delcher A.L."/>
            <person name="Huson D.H."/>
            <person name="Kravitz S.A."/>
            <person name="Mouchard L."/>
            <person name="Reinert K."/>
            <person name="Remington K.A."/>
            <person name="Clark A.G."/>
            <person name="Waterman M.S."/>
            <person name="Eichler E.E."/>
            <person name="Adams M.D."/>
            <person name="Hunkapiller M.W."/>
            <person name="Myers E.W."/>
            <person name="Venter J.C."/>
        </authorList>
    </citation>
    <scope>NUCLEOTIDE SEQUENCE [LARGE SCALE GENOMIC DNA]</scope>
</reference>
<reference key="6">
    <citation type="journal article" date="2004" name="Genome Res.">
        <title>The status, quality, and expansion of the NIH full-length cDNA project: the Mammalian Gene Collection (MGC).</title>
        <authorList>
            <consortium name="The MGC Project Team"/>
        </authorList>
    </citation>
    <scope>NUCLEOTIDE SEQUENCE [LARGE SCALE MRNA] (ISOFORMS 1 AND 2)</scope>
    <source>
        <tissue>Brain</tissue>
        <tissue>Skin</tissue>
    </source>
</reference>
<reference key="7">
    <citation type="journal article" date="2012" name="Proc. Natl. Acad. Sci. U.S.A.">
        <title>N-terminal acetylome analyses and functional insights of the N-terminal acetyltransferase NatB.</title>
        <authorList>
            <person name="Van Damme P."/>
            <person name="Lasa M."/>
            <person name="Polevoda B."/>
            <person name="Gazquez C."/>
            <person name="Elosegui-Artola A."/>
            <person name="Kim D.S."/>
            <person name="De Juan-Pardo E."/>
            <person name="Demeyer K."/>
            <person name="Hole K."/>
            <person name="Larrea E."/>
            <person name="Timmerman E."/>
            <person name="Prieto J."/>
            <person name="Arnesen T."/>
            <person name="Sherman F."/>
            <person name="Gevaert K."/>
            <person name="Aldabe R."/>
        </authorList>
    </citation>
    <scope>ACETYLATION [LARGE SCALE ANALYSIS] AT MET-1</scope>
    <scope>IDENTIFICATION BY MASS SPECTROMETRY [LARGE SCALE ANALYSIS]</scope>
</reference>
<reference key="8">
    <citation type="journal article" date="2002" name="J. Biol. Chem.">
        <title>Structural model of a malonyl-CoA-binding site of carnitine octanoyltransferase and carnitine palmitoyltransferase I: mutational analysis of a malonyl-CoA affinity domain.</title>
        <authorList>
            <person name="Morillas M."/>
            <person name="Gomez-Puertas P."/>
            <person name="Rubi B."/>
            <person name="Clotet J."/>
            <person name="Arino J."/>
            <person name="Valencia A."/>
            <person name="Hegardt F.G."/>
            <person name="Serra D."/>
            <person name="Asins G."/>
        </authorList>
    </citation>
    <scope>3D-STRUCTURE MODELING</scope>
</reference>
<feature type="chain" id="PRO_0000210169" description="Peroxisomal carnitine O-octanoyltransferase">
    <location>
        <begin position="1"/>
        <end position="612"/>
    </location>
</feature>
<feature type="short sequence motif" description="Microbody targeting signal" evidence="3">
    <location>
        <begin position="610"/>
        <end position="612"/>
    </location>
</feature>
<feature type="active site" description="Proton acceptor" evidence="1">
    <location>
        <position position="327"/>
    </location>
</feature>
<feature type="binding site" evidence="1">
    <location>
        <position position="406"/>
    </location>
    <ligand>
        <name>CoA</name>
        <dbReference type="ChEBI" id="CHEBI:57287"/>
    </ligand>
</feature>
<feature type="binding site" evidence="1">
    <location>
        <begin position="410"/>
        <end position="417"/>
    </location>
    <ligand>
        <name>CoA</name>
        <dbReference type="ChEBI" id="CHEBI:57287"/>
    </ligand>
</feature>
<feature type="binding site" evidence="1">
    <location>
        <position position="439"/>
    </location>
    <ligand>
        <name>(R)-carnitine</name>
        <dbReference type="ChEBI" id="CHEBI:16347"/>
    </ligand>
</feature>
<feature type="binding site" evidence="1">
    <location>
        <position position="441"/>
    </location>
    <ligand>
        <name>(R)-carnitine</name>
        <dbReference type="ChEBI" id="CHEBI:16347"/>
    </ligand>
</feature>
<feature type="binding site" evidence="1">
    <location>
        <position position="452"/>
    </location>
    <ligand>
        <name>(R)-carnitine</name>
        <dbReference type="ChEBI" id="CHEBI:16347"/>
    </ligand>
</feature>
<feature type="modified residue" description="N-acetylmethionine" evidence="8">
    <location>
        <position position="1"/>
    </location>
</feature>
<feature type="modified residue" description="N6-succinyllysine" evidence="2">
    <location>
        <position position="40"/>
    </location>
</feature>
<feature type="modified residue" description="N6-succinyllysine" evidence="2">
    <location>
        <position position="57"/>
    </location>
</feature>
<feature type="modified residue" description="N6-acetyllysine; alternate" evidence="2">
    <location>
        <position position="406"/>
    </location>
</feature>
<feature type="modified residue" description="N6-succinyllysine; alternate" evidence="2">
    <location>
        <position position="406"/>
    </location>
</feature>
<feature type="splice variant" id="VSP_046953" description="In isoform 3." evidence="6">
    <original>S</original>
    <variation>SVTRTCYQIRGLDPDAKRGFLDLTREGIQ</variation>
    <location>
        <position position="38"/>
    </location>
</feature>
<feature type="splice variant" id="VSP_045213" description="In isoform 2." evidence="5">
    <original>LEEWWLN</original>
    <variation>VFVVIIE</variation>
    <location>
        <begin position="81"/>
        <end position="87"/>
    </location>
</feature>
<feature type="splice variant" id="VSP_045214" description="In isoform 2." evidence="5">
    <location>
        <begin position="88"/>
        <end position="612"/>
    </location>
</feature>
<feature type="sequence variant" id="VAR_048612" description="In dbSNP:rs3827653.">
    <original>R</original>
    <variation>H</variation>
    <location>
        <position position="94"/>
    </location>
</feature>
<feature type="sequence variant" id="VAR_048613" description="In dbSNP:rs7785206.">
    <original>V</original>
    <variation>L</variation>
    <location>
        <position position="474"/>
    </location>
</feature>
<feature type="sequence conflict" description="In Ref. 1; AAF03234." evidence="6" ref="1">
    <original>V</original>
    <variation>L</variation>
    <location>
        <position position="144"/>
    </location>
</feature>
<feature type="sequence conflict" description="In Ref. 2; AAD41654." evidence="6" ref="2">
    <original>V</original>
    <variation>G</variation>
    <location>
        <position position="168"/>
    </location>
</feature>
<accession>Q9UKG9</accession>
<accession>A4D1D6</accession>
<accession>E7EQF2</accession>
<accession>Q86V17</accession>
<accession>Q8IUW9</accession>
<accession>Q9Y6I2</accession>
<dbReference type="EC" id="2.3.1.137" evidence="4"/>
<dbReference type="EMBL" id="AF168793">
    <property type="protein sequence ID" value="AAF03234.1"/>
    <property type="molecule type" value="mRNA"/>
</dbReference>
<dbReference type="EMBL" id="AF073770">
    <property type="protein sequence ID" value="AAD41654.1"/>
    <property type="molecule type" value="mRNA"/>
</dbReference>
<dbReference type="EMBL" id="AC005045">
    <property type="status" value="NOT_ANNOTATED_CDS"/>
    <property type="molecule type" value="Genomic_DNA"/>
</dbReference>
<dbReference type="EMBL" id="CH236949">
    <property type="protein sequence ID" value="EAL24177.1"/>
    <property type="molecule type" value="Genomic_DNA"/>
</dbReference>
<dbReference type="EMBL" id="CH471091">
    <property type="protein sequence ID" value="EAW76954.1"/>
    <property type="molecule type" value="Genomic_DNA"/>
</dbReference>
<dbReference type="EMBL" id="BC039004">
    <property type="protein sequence ID" value="AAH39004.1"/>
    <property type="molecule type" value="mRNA"/>
</dbReference>
<dbReference type="EMBL" id="BC051874">
    <property type="protein sequence ID" value="AAH51874.1"/>
    <property type="molecule type" value="mRNA"/>
</dbReference>
<dbReference type="CCDS" id="CCDS47634.1">
    <molecule id="Q9UKG9-3"/>
</dbReference>
<dbReference type="CCDS" id="CCDS5604.1">
    <molecule id="Q9UKG9-1"/>
</dbReference>
<dbReference type="CCDS" id="CCDS59062.1">
    <molecule id="Q9UKG9-2"/>
</dbReference>
<dbReference type="PIR" id="JC7101">
    <property type="entry name" value="JC7101"/>
</dbReference>
<dbReference type="RefSeq" id="NP_001137407.1">
    <molecule id="Q9UKG9-3"/>
    <property type="nucleotide sequence ID" value="NM_001143935.2"/>
</dbReference>
<dbReference type="RefSeq" id="NP_001230674.1">
    <molecule id="Q9UKG9-2"/>
    <property type="nucleotide sequence ID" value="NM_001243745.3"/>
</dbReference>
<dbReference type="RefSeq" id="NP_066974.2">
    <molecule id="Q9UKG9-1"/>
    <property type="nucleotide sequence ID" value="NM_021151.3"/>
</dbReference>
<dbReference type="SMR" id="Q9UKG9"/>
<dbReference type="BioGRID" id="120098">
    <property type="interactions" value="16"/>
</dbReference>
<dbReference type="FunCoup" id="Q9UKG9">
    <property type="interactions" value="1872"/>
</dbReference>
<dbReference type="IntAct" id="Q9UKG9">
    <property type="interactions" value="16"/>
</dbReference>
<dbReference type="STRING" id="9606.ENSP00000413575"/>
<dbReference type="BindingDB" id="Q9UKG9"/>
<dbReference type="ChEMBL" id="CHEMBL2206"/>
<dbReference type="DrugBank" id="DB02648">
    <property type="generic name" value="(3-Carboxy-2-(R)-Hydroxy-Propyl)-Trimethyl-Ammonium"/>
</dbReference>
<dbReference type="DrugBank" id="DB03832">
    <property type="generic name" value="3-Carboxy-N,N,N-Trimethyl-2-(Octanoyloxy)Propan-1-Aminium"/>
</dbReference>
<dbReference type="DrugBank" id="DB00583">
    <property type="generic name" value="Levocarnitine"/>
</dbReference>
<dbReference type="SwissLipids" id="SLP:000001055"/>
<dbReference type="TCDB" id="4.C.2.1.2">
    <property type="family name" value="the carnitine o-acyl transferase (carat) family"/>
</dbReference>
<dbReference type="iPTMnet" id="Q9UKG9"/>
<dbReference type="MetOSite" id="Q9UKG9"/>
<dbReference type="PhosphoSitePlus" id="Q9UKG9"/>
<dbReference type="SwissPalm" id="Q9UKG9"/>
<dbReference type="BioMuta" id="CROT"/>
<dbReference type="DMDM" id="48429265"/>
<dbReference type="jPOST" id="Q9UKG9"/>
<dbReference type="MassIVE" id="Q9UKG9"/>
<dbReference type="PaxDb" id="9606-ENSP00000413575"/>
<dbReference type="PeptideAtlas" id="Q9UKG9"/>
<dbReference type="ProteomicsDB" id="17560"/>
<dbReference type="ProteomicsDB" id="69947"/>
<dbReference type="ProteomicsDB" id="84787">
    <molecule id="Q9UKG9-1"/>
</dbReference>
<dbReference type="Pumba" id="Q9UKG9"/>
<dbReference type="Antibodypedia" id="15286">
    <property type="antibodies" value="330 antibodies from 33 providers"/>
</dbReference>
<dbReference type="DNASU" id="54677"/>
<dbReference type="Ensembl" id="ENST00000331536.8">
    <molecule id="Q9UKG9-1"/>
    <property type="protein sequence ID" value="ENSP00000331981.4"/>
    <property type="gene ID" value="ENSG00000005469.12"/>
</dbReference>
<dbReference type="Ensembl" id="ENST00000412227.6">
    <molecule id="Q9UKG9-2"/>
    <property type="protein sequence ID" value="ENSP00000404867.2"/>
    <property type="gene ID" value="ENSG00000005469.12"/>
</dbReference>
<dbReference type="Ensembl" id="ENST00000419147.6">
    <molecule id="Q9UKG9-3"/>
    <property type="protein sequence ID" value="ENSP00000413575.2"/>
    <property type="gene ID" value="ENSG00000005469.12"/>
</dbReference>
<dbReference type="GeneID" id="54677"/>
<dbReference type="KEGG" id="hsa:54677"/>
<dbReference type="MANE-Select" id="ENST00000331536.8">
    <property type="protein sequence ID" value="ENSP00000331981.4"/>
    <property type="RefSeq nucleotide sequence ID" value="NM_021151.4"/>
    <property type="RefSeq protein sequence ID" value="NP_066974.2"/>
</dbReference>
<dbReference type="UCSC" id="uc003uis.4">
    <molecule id="Q9UKG9-1"/>
    <property type="organism name" value="human"/>
</dbReference>
<dbReference type="AGR" id="HGNC:2366"/>
<dbReference type="CTD" id="54677"/>
<dbReference type="DisGeNET" id="54677"/>
<dbReference type="GeneCards" id="CROT"/>
<dbReference type="HGNC" id="HGNC:2366">
    <property type="gene designation" value="CROT"/>
</dbReference>
<dbReference type="HPA" id="ENSG00000005469">
    <property type="expression patterns" value="Low tissue specificity"/>
</dbReference>
<dbReference type="MIM" id="606090">
    <property type="type" value="gene"/>
</dbReference>
<dbReference type="neXtProt" id="NX_Q9UKG9"/>
<dbReference type="OpenTargets" id="ENSG00000005469"/>
<dbReference type="PharmGKB" id="PA26887"/>
<dbReference type="VEuPathDB" id="HostDB:ENSG00000005469"/>
<dbReference type="eggNOG" id="KOG3718">
    <property type="taxonomic scope" value="Eukaryota"/>
</dbReference>
<dbReference type="GeneTree" id="ENSGT01130000278297"/>
<dbReference type="HOGENOM" id="CLU_2482687_0_0_1"/>
<dbReference type="InParanoid" id="Q9UKG9"/>
<dbReference type="OMA" id="DVWAKDY"/>
<dbReference type="OrthoDB" id="240216at2759"/>
<dbReference type="PAN-GO" id="Q9UKG9">
    <property type="GO annotations" value="2 GO annotations based on evolutionary models"/>
</dbReference>
<dbReference type="PhylomeDB" id="Q9UKG9"/>
<dbReference type="TreeFam" id="TF313836"/>
<dbReference type="BRENDA" id="2.3.1.137">
    <property type="organism ID" value="2681"/>
</dbReference>
<dbReference type="PathwayCommons" id="Q9UKG9"/>
<dbReference type="Reactome" id="R-HSA-389887">
    <property type="pathway name" value="Beta-oxidation of pristanoyl-CoA"/>
</dbReference>
<dbReference type="Reactome" id="R-HSA-9033241">
    <property type="pathway name" value="Peroxisomal protein import"/>
</dbReference>
<dbReference type="SignaLink" id="Q9UKG9"/>
<dbReference type="UniPathway" id="UPA00659"/>
<dbReference type="BioGRID-ORCS" id="54677">
    <property type="hits" value="14 hits in 1165 CRISPR screens"/>
</dbReference>
<dbReference type="ChiTaRS" id="CROT">
    <property type="organism name" value="human"/>
</dbReference>
<dbReference type="GeneWiki" id="CROT_(gene)"/>
<dbReference type="GenomeRNAi" id="54677"/>
<dbReference type="Pharos" id="Q9UKG9">
    <property type="development level" value="Tbio"/>
</dbReference>
<dbReference type="PRO" id="PR:Q9UKG9"/>
<dbReference type="Proteomes" id="UP000005640">
    <property type="component" value="Chromosome 7"/>
</dbReference>
<dbReference type="RNAct" id="Q9UKG9">
    <property type="molecule type" value="protein"/>
</dbReference>
<dbReference type="Bgee" id="ENSG00000005469">
    <property type="expression patterns" value="Expressed in esophagus squamous epithelium and 203 other cell types or tissues"/>
</dbReference>
<dbReference type="ExpressionAtlas" id="Q9UKG9">
    <property type="expression patterns" value="baseline and differential"/>
</dbReference>
<dbReference type="GO" id="GO:0005829">
    <property type="term" value="C:cytosol"/>
    <property type="evidence" value="ECO:0000304"/>
    <property type="project" value="Reactome"/>
</dbReference>
<dbReference type="GO" id="GO:0043231">
    <property type="term" value="C:intracellular membrane-bounded organelle"/>
    <property type="evidence" value="ECO:0000314"/>
    <property type="project" value="HPA"/>
</dbReference>
<dbReference type="GO" id="GO:0005782">
    <property type="term" value="C:peroxisomal matrix"/>
    <property type="evidence" value="ECO:0000304"/>
    <property type="project" value="Reactome"/>
</dbReference>
<dbReference type="GO" id="GO:0005777">
    <property type="term" value="C:peroxisome"/>
    <property type="evidence" value="ECO:0000314"/>
    <property type="project" value="UniProtKB"/>
</dbReference>
<dbReference type="GO" id="GO:0008458">
    <property type="term" value="F:carnitine O-octanoyltransferase activity"/>
    <property type="evidence" value="ECO:0000314"/>
    <property type="project" value="UniProtKB"/>
</dbReference>
<dbReference type="GO" id="GO:0009437">
    <property type="term" value="P:carnitine metabolic process"/>
    <property type="evidence" value="ECO:0000250"/>
    <property type="project" value="UniProtKB"/>
</dbReference>
<dbReference type="GO" id="GO:0015936">
    <property type="term" value="P:coenzyme A metabolic process"/>
    <property type="evidence" value="ECO:0000250"/>
    <property type="project" value="UniProtKB"/>
</dbReference>
<dbReference type="GO" id="GO:0006635">
    <property type="term" value="P:fatty acid beta-oxidation"/>
    <property type="evidence" value="ECO:0000314"/>
    <property type="project" value="UniProtKB"/>
</dbReference>
<dbReference type="GO" id="GO:0033540">
    <property type="term" value="P:fatty acid beta-oxidation using acyl-CoA oxidase"/>
    <property type="evidence" value="ECO:0000304"/>
    <property type="project" value="Reactome"/>
</dbReference>
<dbReference type="GO" id="GO:0006631">
    <property type="term" value="P:fatty acid metabolic process"/>
    <property type="evidence" value="ECO:0000315"/>
    <property type="project" value="UniProtKB"/>
</dbReference>
<dbReference type="GO" id="GO:0015908">
    <property type="term" value="P:fatty acid transport"/>
    <property type="evidence" value="ECO:0007669"/>
    <property type="project" value="Ensembl"/>
</dbReference>
<dbReference type="GO" id="GO:0006091">
    <property type="term" value="P:generation of precursor metabolites and energy"/>
    <property type="evidence" value="ECO:0000314"/>
    <property type="project" value="UniProtKB"/>
</dbReference>
<dbReference type="GO" id="GO:0051791">
    <property type="term" value="P:medium-chain fatty acid metabolic process"/>
    <property type="evidence" value="ECO:0000314"/>
    <property type="project" value="UniProtKB"/>
</dbReference>
<dbReference type="FunFam" id="3.30.559.70:FF:000006">
    <property type="entry name" value="Peroxisomal carnitine O-octanoyltransferase"/>
    <property type="match status" value="1"/>
</dbReference>
<dbReference type="Gene3D" id="3.30.559.10">
    <property type="entry name" value="Chloramphenicol acetyltransferase-like domain"/>
    <property type="match status" value="1"/>
</dbReference>
<dbReference type="Gene3D" id="1.10.275.20">
    <property type="entry name" value="Choline/Carnitine o-acyltransferase"/>
    <property type="match status" value="1"/>
</dbReference>
<dbReference type="Gene3D" id="3.30.559.70">
    <property type="entry name" value="Choline/Carnitine o-acyltransferase, domain 2"/>
    <property type="match status" value="1"/>
</dbReference>
<dbReference type="InterPro" id="IPR000542">
    <property type="entry name" value="Carn_acyl_trans"/>
</dbReference>
<dbReference type="InterPro" id="IPR042572">
    <property type="entry name" value="Carn_acyl_trans_N"/>
</dbReference>
<dbReference type="InterPro" id="IPR023213">
    <property type="entry name" value="CAT-like_dom_sf"/>
</dbReference>
<dbReference type="InterPro" id="IPR039551">
    <property type="entry name" value="Cho/carn_acyl_trans"/>
</dbReference>
<dbReference type="InterPro" id="IPR042231">
    <property type="entry name" value="Cho/carn_acyl_trans_2"/>
</dbReference>
<dbReference type="PANTHER" id="PTHR22589">
    <property type="entry name" value="CARNITINE O-ACYLTRANSFERASE"/>
    <property type="match status" value="1"/>
</dbReference>
<dbReference type="PANTHER" id="PTHR22589:SF67">
    <property type="entry name" value="PEROXISOMAL CARNITINE O-OCTANOYLTRANSFERASE"/>
    <property type="match status" value="1"/>
</dbReference>
<dbReference type="Pfam" id="PF00755">
    <property type="entry name" value="Carn_acyltransf"/>
    <property type="match status" value="1"/>
</dbReference>
<dbReference type="SUPFAM" id="SSF52777">
    <property type="entry name" value="CoA-dependent acyltransferases"/>
    <property type="match status" value="2"/>
</dbReference>
<dbReference type="PROSITE" id="PS00439">
    <property type="entry name" value="ACYLTRANSF_C_1"/>
    <property type="match status" value="1"/>
</dbReference>
<dbReference type="PROSITE" id="PS00440">
    <property type="entry name" value="ACYLTRANSF_C_2"/>
    <property type="match status" value="1"/>
</dbReference>
<protein>
    <recommendedName>
        <fullName>Peroxisomal carnitine O-octanoyltransferase</fullName>
        <shortName>COT</shortName>
        <ecNumber evidence="4">2.3.1.137</ecNumber>
    </recommendedName>
</protein>
<organism>
    <name type="scientific">Homo sapiens</name>
    <name type="common">Human</name>
    <dbReference type="NCBI Taxonomy" id="9606"/>
    <lineage>
        <taxon>Eukaryota</taxon>
        <taxon>Metazoa</taxon>
        <taxon>Chordata</taxon>
        <taxon>Craniata</taxon>
        <taxon>Vertebrata</taxon>
        <taxon>Euteleostomi</taxon>
        <taxon>Mammalia</taxon>
        <taxon>Eutheria</taxon>
        <taxon>Euarchontoglires</taxon>
        <taxon>Primates</taxon>
        <taxon>Haplorrhini</taxon>
        <taxon>Catarrhini</taxon>
        <taxon>Hominidae</taxon>
        <taxon>Homo</taxon>
    </lineage>
</organism>
<evidence type="ECO:0000250" key="1"/>
<evidence type="ECO:0000250" key="2">
    <source>
        <dbReference type="UniProtKB" id="Q9DC50"/>
    </source>
</evidence>
<evidence type="ECO:0000255" key="3"/>
<evidence type="ECO:0000269" key="4">
    <source>
    </source>
</evidence>
<evidence type="ECO:0000303" key="5">
    <source>
    </source>
</evidence>
<evidence type="ECO:0000305" key="6"/>
<evidence type="ECO:0000305" key="7">
    <source>
    </source>
</evidence>
<evidence type="ECO:0007744" key="8">
    <source>
    </source>
</evidence>